<comment type="catalytic activity">
    <reaction evidence="1">
        <text>(6R)-10-formyltetrahydrofolate + 5-amino-1-(5-phospho-beta-D-ribosyl)imidazole-4-carboxamide = 5-formamido-1-(5-phospho-D-ribosyl)imidazole-4-carboxamide + (6S)-5,6,7,8-tetrahydrofolate</text>
        <dbReference type="Rhea" id="RHEA:22192"/>
        <dbReference type="ChEBI" id="CHEBI:57453"/>
        <dbReference type="ChEBI" id="CHEBI:58467"/>
        <dbReference type="ChEBI" id="CHEBI:58475"/>
        <dbReference type="ChEBI" id="CHEBI:195366"/>
        <dbReference type="EC" id="2.1.2.3"/>
    </reaction>
</comment>
<comment type="catalytic activity">
    <reaction evidence="1">
        <text>IMP + H2O = 5-formamido-1-(5-phospho-D-ribosyl)imidazole-4-carboxamide</text>
        <dbReference type="Rhea" id="RHEA:18445"/>
        <dbReference type="ChEBI" id="CHEBI:15377"/>
        <dbReference type="ChEBI" id="CHEBI:58053"/>
        <dbReference type="ChEBI" id="CHEBI:58467"/>
        <dbReference type="EC" id="3.5.4.10"/>
    </reaction>
</comment>
<comment type="pathway">
    <text evidence="1">Purine metabolism; IMP biosynthesis via de novo pathway; 5-formamido-1-(5-phospho-D-ribosyl)imidazole-4-carboxamide from 5-amino-1-(5-phospho-D-ribosyl)imidazole-4-carboxamide (10-formyl THF route): step 1/1.</text>
</comment>
<comment type="pathway">
    <text evidence="1">Purine metabolism; IMP biosynthesis via de novo pathway; IMP from 5-formamido-1-(5-phospho-D-ribosyl)imidazole-4-carboxamide: step 1/1.</text>
</comment>
<comment type="domain">
    <text evidence="1">The IMP cyclohydrolase activity resides in the N-terminal region.</text>
</comment>
<comment type="similarity">
    <text evidence="1">Belongs to the PurH family.</text>
</comment>
<evidence type="ECO:0000255" key="1">
    <source>
        <dbReference type="HAMAP-Rule" id="MF_00139"/>
    </source>
</evidence>
<evidence type="ECO:0000255" key="2">
    <source>
        <dbReference type="PROSITE-ProRule" id="PRU01202"/>
    </source>
</evidence>
<protein>
    <recommendedName>
        <fullName evidence="1">Bifunctional purine biosynthesis protein PurH</fullName>
    </recommendedName>
    <domain>
        <recommendedName>
            <fullName evidence="1">Phosphoribosylaminoimidazolecarboxamide formyltransferase</fullName>
            <ecNumber evidence="1">2.1.2.3</ecNumber>
        </recommendedName>
        <alternativeName>
            <fullName evidence="1">AICAR transformylase</fullName>
        </alternativeName>
    </domain>
    <domain>
        <recommendedName>
            <fullName evidence="1">IMP cyclohydrolase</fullName>
            <ecNumber evidence="1">3.5.4.10</ecNumber>
        </recommendedName>
        <alternativeName>
            <fullName evidence="1">ATIC</fullName>
        </alternativeName>
        <alternativeName>
            <fullName evidence="1">IMP synthase</fullName>
        </alternativeName>
        <alternativeName>
            <fullName evidence="1">Inosinicase</fullName>
        </alternativeName>
    </domain>
</protein>
<dbReference type="EC" id="2.1.2.3" evidence="1"/>
<dbReference type="EC" id="3.5.4.10" evidence="1"/>
<dbReference type="EMBL" id="CP000828">
    <property type="protein sequence ID" value="ABW30724.1"/>
    <property type="molecule type" value="Genomic_DNA"/>
</dbReference>
<dbReference type="RefSeq" id="WP_012165938.1">
    <property type="nucleotide sequence ID" value="NC_009925.1"/>
</dbReference>
<dbReference type="SMR" id="B0BZH9"/>
<dbReference type="STRING" id="329726.AM1_5779"/>
<dbReference type="KEGG" id="amr:AM1_5779"/>
<dbReference type="eggNOG" id="COG0138">
    <property type="taxonomic scope" value="Bacteria"/>
</dbReference>
<dbReference type="HOGENOM" id="CLU_016316_5_2_3"/>
<dbReference type="OrthoDB" id="9802065at2"/>
<dbReference type="UniPathway" id="UPA00074">
    <property type="reaction ID" value="UER00133"/>
</dbReference>
<dbReference type="UniPathway" id="UPA00074">
    <property type="reaction ID" value="UER00135"/>
</dbReference>
<dbReference type="Proteomes" id="UP000000268">
    <property type="component" value="Chromosome"/>
</dbReference>
<dbReference type="GO" id="GO:0005829">
    <property type="term" value="C:cytosol"/>
    <property type="evidence" value="ECO:0007669"/>
    <property type="project" value="TreeGrafter"/>
</dbReference>
<dbReference type="GO" id="GO:0003937">
    <property type="term" value="F:IMP cyclohydrolase activity"/>
    <property type="evidence" value="ECO:0007669"/>
    <property type="project" value="UniProtKB-UniRule"/>
</dbReference>
<dbReference type="GO" id="GO:0004643">
    <property type="term" value="F:phosphoribosylaminoimidazolecarboxamide formyltransferase activity"/>
    <property type="evidence" value="ECO:0007669"/>
    <property type="project" value="UniProtKB-UniRule"/>
</dbReference>
<dbReference type="GO" id="GO:0006189">
    <property type="term" value="P:'de novo' IMP biosynthetic process"/>
    <property type="evidence" value="ECO:0007669"/>
    <property type="project" value="UniProtKB-UniRule"/>
</dbReference>
<dbReference type="CDD" id="cd01421">
    <property type="entry name" value="IMPCH"/>
    <property type="match status" value="1"/>
</dbReference>
<dbReference type="FunFam" id="3.40.140.20:FF:000001">
    <property type="entry name" value="Bifunctional purine biosynthesis protein PurH"/>
    <property type="match status" value="1"/>
</dbReference>
<dbReference type="FunFam" id="3.40.50.1380:FF:000001">
    <property type="entry name" value="Bifunctional purine biosynthesis protein PurH"/>
    <property type="match status" value="1"/>
</dbReference>
<dbReference type="Gene3D" id="3.40.140.20">
    <property type="match status" value="2"/>
</dbReference>
<dbReference type="Gene3D" id="3.40.50.1380">
    <property type="entry name" value="Methylglyoxal synthase-like domain"/>
    <property type="match status" value="1"/>
</dbReference>
<dbReference type="HAMAP" id="MF_00139">
    <property type="entry name" value="PurH"/>
    <property type="match status" value="1"/>
</dbReference>
<dbReference type="InterPro" id="IPR024051">
    <property type="entry name" value="AICAR_Tfase_dup_dom_sf"/>
</dbReference>
<dbReference type="InterPro" id="IPR016193">
    <property type="entry name" value="Cytidine_deaminase-like"/>
</dbReference>
<dbReference type="InterPro" id="IPR011607">
    <property type="entry name" value="MGS-like_dom"/>
</dbReference>
<dbReference type="InterPro" id="IPR036914">
    <property type="entry name" value="MGS-like_dom_sf"/>
</dbReference>
<dbReference type="InterPro" id="IPR002695">
    <property type="entry name" value="PurH-like"/>
</dbReference>
<dbReference type="NCBIfam" id="NF002049">
    <property type="entry name" value="PRK00881.1"/>
    <property type="match status" value="1"/>
</dbReference>
<dbReference type="NCBIfam" id="TIGR00355">
    <property type="entry name" value="purH"/>
    <property type="match status" value="1"/>
</dbReference>
<dbReference type="PANTHER" id="PTHR11692:SF0">
    <property type="entry name" value="BIFUNCTIONAL PURINE BIOSYNTHESIS PROTEIN ATIC"/>
    <property type="match status" value="1"/>
</dbReference>
<dbReference type="PANTHER" id="PTHR11692">
    <property type="entry name" value="BIFUNCTIONAL PURINE BIOSYNTHESIS PROTEIN PURH"/>
    <property type="match status" value="1"/>
</dbReference>
<dbReference type="Pfam" id="PF01808">
    <property type="entry name" value="AICARFT_IMPCHas"/>
    <property type="match status" value="1"/>
</dbReference>
<dbReference type="Pfam" id="PF02142">
    <property type="entry name" value="MGS"/>
    <property type="match status" value="1"/>
</dbReference>
<dbReference type="PIRSF" id="PIRSF000414">
    <property type="entry name" value="AICARFT_IMPCHas"/>
    <property type="match status" value="1"/>
</dbReference>
<dbReference type="SMART" id="SM00798">
    <property type="entry name" value="AICARFT_IMPCHas"/>
    <property type="match status" value="1"/>
</dbReference>
<dbReference type="SMART" id="SM00851">
    <property type="entry name" value="MGS"/>
    <property type="match status" value="1"/>
</dbReference>
<dbReference type="SUPFAM" id="SSF53927">
    <property type="entry name" value="Cytidine deaminase-like"/>
    <property type="match status" value="1"/>
</dbReference>
<dbReference type="SUPFAM" id="SSF52335">
    <property type="entry name" value="Methylglyoxal synthase-like"/>
    <property type="match status" value="1"/>
</dbReference>
<dbReference type="PROSITE" id="PS51855">
    <property type="entry name" value="MGS"/>
    <property type="match status" value="1"/>
</dbReference>
<organism>
    <name type="scientific">Acaryochloris marina (strain MBIC 11017)</name>
    <dbReference type="NCBI Taxonomy" id="329726"/>
    <lineage>
        <taxon>Bacteria</taxon>
        <taxon>Bacillati</taxon>
        <taxon>Cyanobacteriota</taxon>
        <taxon>Cyanophyceae</taxon>
        <taxon>Acaryochloridales</taxon>
        <taxon>Acaryochloridaceae</taxon>
        <taxon>Acaryochloris</taxon>
    </lineage>
</organism>
<feature type="chain" id="PRO_1000076472" description="Bifunctional purine biosynthesis protein PurH">
    <location>
        <begin position="1"/>
        <end position="524"/>
    </location>
</feature>
<feature type="domain" description="MGS-like" evidence="2">
    <location>
        <begin position="1"/>
        <end position="154"/>
    </location>
</feature>
<sequence length="524" mass="55848">MTRLALLSTSDKTGLVELAQQLVNEYGFTLVSSGGTAVTIEKAGLPVTKVSDYTGSPEILGGRVKTLHPRIHGGILARRSLESDVQDLTENNIQGIDLVVVNLYPFEETIAKQKAQGITDPDQALADAVEQIDIGGPTMIRAAAKNHAHVTVLCDPQQYASYLQELKHGEGETSLPFRQACALKVFERMASYDRAIATHLRQSLATTDSQTQLSILGTAKQTLRYGENPHQNAVWYQESDTASGWAAAQQLQGKELSYNNLVDLEAARRVIAEFAQAETQPTVAILKHNNPCGVAQGETLLQAYEKALAADSVSAFGGIVAMNRAIDTDTAQVLTKTFLECIVAPECQPEAAAVLQAKSNLRVLVLPDLVSGPAVTVKAIAGGWLAQAADETLTPPADWQIVTQAKPTEAQLAELLFAWKVVKHVKSNAIVVTKDHTTLGVGAGQMNRVGSVNIALQQAGEKAQGGTLASDGFFPFDDSVRTAAAAGITAIIQPGGSIRDKDSIQAADELGIVMAFTGTRHFLH</sequence>
<gene>
    <name evidence="1" type="primary">purH</name>
    <name type="ordered locus">AM1_5779</name>
</gene>
<name>PUR9_ACAM1</name>
<reference key="1">
    <citation type="journal article" date="2008" name="Proc. Natl. Acad. Sci. U.S.A.">
        <title>Niche adaptation and genome expansion in the chlorophyll d-producing cyanobacterium Acaryochloris marina.</title>
        <authorList>
            <person name="Swingley W.D."/>
            <person name="Chen M."/>
            <person name="Cheung P.C."/>
            <person name="Conrad A.L."/>
            <person name="Dejesa L.C."/>
            <person name="Hao J."/>
            <person name="Honchak B.M."/>
            <person name="Karbach L.E."/>
            <person name="Kurdoglu A."/>
            <person name="Lahiri S."/>
            <person name="Mastrian S.D."/>
            <person name="Miyashita H."/>
            <person name="Page L."/>
            <person name="Ramakrishna P."/>
            <person name="Satoh S."/>
            <person name="Sattley W.M."/>
            <person name="Shimada Y."/>
            <person name="Taylor H.L."/>
            <person name="Tomo T."/>
            <person name="Tsuchiya T."/>
            <person name="Wang Z.T."/>
            <person name="Raymond J."/>
            <person name="Mimuro M."/>
            <person name="Blankenship R.E."/>
            <person name="Touchman J.W."/>
        </authorList>
    </citation>
    <scope>NUCLEOTIDE SEQUENCE [LARGE SCALE GENOMIC DNA]</scope>
    <source>
        <strain>MBIC 11017</strain>
    </source>
</reference>
<proteinExistence type="inferred from homology"/>
<keyword id="KW-0378">Hydrolase</keyword>
<keyword id="KW-0511">Multifunctional enzyme</keyword>
<keyword id="KW-0658">Purine biosynthesis</keyword>
<keyword id="KW-1185">Reference proteome</keyword>
<keyword id="KW-0808">Transferase</keyword>
<accession>B0BZH9</accession>